<comment type="similarity">
    <text evidence="1">Belongs to the UPF0301 (AlgH) family.</text>
</comment>
<organism>
    <name type="scientific">Escherichia coli O139:H28 (strain E24377A / ETEC)</name>
    <dbReference type="NCBI Taxonomy" id="331111"/>
    <lineage>
        <taxon>Bacteria</taxon>
        <taxon>Pseudomonadati</taxon>
        <taxon>Pseudomonadota</taxon>
        <taxon>Gammaproteobacteria</taxon>
        <taxon>Enterobacterales</taxon>
        <taxon>Enterobacteriaceae</taxon>
        <taxon>Escherichia</taxon>
    </lineage>
</organism>
<gene>
    <name evidence="1" type="primary">yqgE</name>
    <name type="ordered locus">EcE24377A_3291</name>
</gene>
<protein>
    <recommendedName>
        <fullName evidence="1">UPF0301 protein YqgE</fullName>
    </recommendedName>
</protein>
<dbReference type="EMBL" id="CP000800">
    <property type="protein sequence ID" value="ABV21010.1"/>
    <property type="molecule type" value="Genomic_DNA"/>
</dbReference>
<dbReference type="RefSeq" id="WP_001053178.1">
    <property type="nucleotide sequence ID" value="NC_009801.1"/>
</dbReference>
<dbReference type="SMR" id="A7ZR71"/>
<dbReference type="KEGG" id="ecw:EcE24377A_3291"/>
<dbReference type="HOGENOM" id="CLU_057596_1_0_6"/>
<dbReference type="Proteomes" id="UP000001122">
    <property type="component" value="Chromosome"/>
</dbReference>
<dbReference type="GO" id="GO:0005829">
    <property type="term" value="C:cytosol"/>
    <property type="evidence" value="ECO:0007669"/>
    <property type="project" value="TreeGrafter"/>
</dbReference>
<dbReference type="FunFam" id="3.30.70.1300:FF:000001">
    <property type="entry name" value="UPF0301 protein YqgE"/>
    <property type="match status" value="1"/>
</dbReference>
<dbReference type="Gene3D" id="3.40.1740.10">
    <property type="entry name" value="VC0467-like"/>
    <property type="match status" value="1"/>
</dbReference>
<dbReference type="Gene3D" id="3.30.70.1300">
    <property type="entry name" value="VC0467-like domains"/>
    <property type="match status" value="1"/>
</dbReference>
<dbReference type="HAMAP" id="MF_00758">
    <property type="entry name" value="UPF0301"/>
    <property type="match status" value="1"/>
</dbReference>
<dbReference type="InterPro" id="IPR003774">
    <property type="entry name" value="AlgH-like"/>
</dbReference>
<dbReference type="NCBIfam" id="NF001266">
    <property type="entry name" value="PRK00228.1-1"/>
    <property type="match status" value="1"/>
</dbReference>
<dbReference type="PANTHER" id="PTHR30327">
    <property type="entry name" value="UNCHARACTERIZED PROTEIN YQGE"/>
    <property type="match status" value="1"/>
</dbReference>
<dbReference type="PANTHER" id="PTHR30327:SF1">
    <property type="entry name" value="UPF0301 PROTEIN YQGE"/>
    <property type="match status" value="1"/>
</dbReference>
<dbReference type="Pfam" id="PF02622">
    <property type="entry name" value="DUF179"/>
    <property type="match status" value="1"/>
</dbReference>
<dbReference type="SUPFAM" id="SSF143456">
    <property type="entry name" value="VC0467-like"/>
    <property type="match status" value="1"/>
</dbReference>
<evidence type="ECO:0000255" key="1">
    <source>
        <dbReference type="HAMAP-Rule" id="MF_00758"/>
    </source>
</evidence>
<name>YQGE_ECO24</name>
<feature type="chain" id="PRO_1000062194" description="UPF0301 protein YqgE">
    <location>
        <begin position="1"/>
        <end position="187"/>
    </location>
</feature>
<accession>A7ZR71</accession>
<proteinExistence type="inferred from homology"/>
<sequence length="187" mass="20686">MNLQHHFLIAMPALQDPIFRRSVVYICEHNTNGAMGIIVNKPLENLKIEGILEKLKITPEPRDESIRLDKPVMLGGPLAEDRGFILHTPPSNFASSIRISDNTVMTTSRDVLETLGTDKQPSDVLVALGYASWEKGQLEQEILDNAWLTAPADLNILFKTPIADRWREAAKLIGVDILTMPGVAGHA</sequence>
<keyword id="KW-1185">Reference proteome</keyword>
<reference key="1">
    <citation type="journal article" date="2008" name="J. Bacteriol.">
        <title>The pangenome structure of Escherichia coli: comparative genomic analysis of E. coli commensal and pathogenic isolates.</title>
        <authorList>
            <person name="Rasko D.A."/>
            <person name="Rosovitz M.J."/>
            <person name="Myers G.S.A."/>
            <person name="Mongodin E.F."/>
            <person name="Fricke W.F."/>
            <person name="Gajer P."/>
            <person name="Crabtree J."/>
            <person name="Sebaihia M."/>
            <person name="Thomson N.R."/>
            <person name="Chaudhuri R."/>
            <person name="Henderson I.R."/>
            <person name="Sperandio V."/>
            <person name="Ravel J."/>
        </authorList>
    </citation>
    <scope>NUCLEOTIDE SEQUENCE [LARGE SCALE GENOMIC DNA]</scope>
    <source>
        <strain>E24377A / ETEC</strain>
    </source>
</reference>